<organism>
    <name type="scientific">Brucella ovis (strain ATCC 25840 / 63/290 / NCTC 10512)</name>
    <dbReference type="NCBI Taxonomy" id="444178"/>
    <lineage>
        <taxon>Bacteria</taxon>
        <taxon>Pseudomonadati</taxon>
        <taxon>Pseudomonadota</taxon>
        <taxon>Alphaproteobacteria</taxon>
        <taxon>Hyphomicrobiales</taxon>
        <taxon>Brucellaceae</taxon>
        <taxon>Brucella/Ochrobactrum group</taxon>
        <taxon>Brucella</taxon>
    </lineage>
</organism>
<keyword id="KW-0285">Flavoprotein</keyword>
<keyword id="KW-0288">FMN</keyword>
<keyword id="KW-0520">NAD</keyword>
<keyword id="KW-0521">NADP</keyword>
<keyword id="KW-0547">Nucleotide-binding</keyword>
<keyword id="KW-0560">Oxidoreductase</keyword>
<gene>
    <name type="ordered locus">BOV_1014</name>
</gene>
<sequence>MVKMLVLYYSAYGHMEQMAKAAAEGAREGGAEVTLKRVPELVPEEVAKASHYKIDQEAPIATPGELADYDAIIIGTATRYGMMASQMKNFLDQTGGLWAKGALINKVGSVMVSTATQHGGAELALISTQWQMQHHGMIIVPLSYAYREQMGNDVVRGGAPYGMTTTADGDGSRQPSAQELDDARFQGRRVAEITAKLHG</sequence>
<reference key="1">
    <citation type="journal article" date="2009" name="PLoS ONE">
        <title>Genome degradation in Brucella ovis corresponds with narrowing of its host range and tissue tropism.</title>
        <authorList>
            <person name="Tsolis R.M."/>
            <person name="Seshadri R."/>
            <person name="Santos R.L."/>
            <person name="Sangari F.J."/>
            <person name="Lobo J.M."/>
            <person name="de Jong M.F."/>
            <person name="Ren Q."/>
            <person name="Myers G."/>
            <person name="Brinkac L.M."/>
            <person name="Nelson W.C."/>
            <person name="Deboy R.T."/>
            <person name="Angiuoli S."/>
            <person name="Khouri H."/>
            <person name="Dimitrov G."/>
            <person name="Robinson J.R."/>
            <person name="Mulligan S."/>
            <person name="Walker R.L."/>
            <person name="Elzer P.E."/>
            <person name="Hassan K.A."/>
            <person name="Paulsen I.T."/>
        </authorList>
    </citation>
    <scope>NUCLEOTIDE SEQUENCE [LARGE SCALE GENOMIC DNA]</scope>
    <source>
        <strain>ATCC 25840 / 63/290 / NCTC 10512</strain>
    </source>
</reference>
<protein>
    <recommendedName>
        <fullName evidence="1">NAD(P)H dehydrogenase (quinone)</fullName>
        <ecNumber evidence="1">1.6.5.2</ecNumber>
    </recommendedName>
    <alternativeName>
        <fullName>Flavoprotein WrbA</fullName>
    </alternativeName>
    <alternativeName>
        <fullName evidence="1">NAD(P)H:quinone oxidoreductase</fullName>
        <shortName evidence="1">NQO</shortName>
    </alternativeName>
</protein>
<proteinExistence type="inferred from homology"/>
<accession>A5VQI8</accession>
<comment type="catalytic activity">
    <reaction evidence="1">
        <text>a quinone + NADH + H(+) = a quinol + NAD(+)</text>
        <dbReference type="Rhea" id="RHEA:46160"/>
        <dbReference type="ChEBI" id="CHEBI:15378"/>
        <dbReference type="ChEBI" id="CHEBI:24646"/>
        <dbReference type="ChEBI" id="CHEBI:57540"/>
        <dbReference type="ChEBI" id="CHEBI:57945"/>
        <dbReference type="ChEBI" id="CHEBI:132124"/>
        <dbReference type="EC" id="1.6.5.2"/>
    </reaction>
</comment>
<comment type="catalytic activity">
    <reaction evidence="1">
        <text>a quinone + NADPH + H(+) = a quinol + NADP(+)</text>
        <dbReference type="Rhea" id="RHEA:46164"/>
        <dbReference type="ChEBI" id="CHEBI:15378"/>
        <dbReference type="ChEBI" id="CHEBI:24646"/>
        <dbReference type="ChEBI" id="CHEBI:57783"/>
        <dbReference type="ChEBI" id="CHEBI:58349"/>
        <dbReference type="ChEBI" id="CHEBI:132124"/>
        <dbReference type="EC" id="1.6.5.2"/>
    </reaction>
</comment>
<comment type="cofactor">
    <cofactor evidence="1">
        <name>FMN</name>
        <dbReference type="ChEBI" id="CHEBI:58210"/>
    </cofactor>
    <text evidence="1">Binds 1 FMN per monomer.</text>
</comment>
<comment type="similarity">
    <text evidence="1">Belongs to the WrbA family.</text>
</comment>
<feature type="chain" id="PRO_1000084131" description="NAD(P)H dehydrogenase (quinone)">
    <location>
        <begin position="1"/>
        <end position="199"/>
    </location>
</feature>
<feature type="domain" description="Flavodoxin-like" evidence="1">
    <location>
        <begin position="4"/>
        <end position="190"/>
    </location>
</feature>
<feature type="region of interest" description="Disordered" evidence="2">
    <location>
        <begin position="158"/>
        <end position="181"/>
    </location>
</feature>
<feature type="compositionally biased region" description="Polar residues" evidence="2">
    <location>
        <begin position="163"/>
        <end position="177"/>
    </location>
</feature>
<feature type="binding site" evidence="1">
    <location>
        <begin position="10"/>
        <end position="15"/>
    </location>
    <ligand>
        <name>FMN</name>
        <dbReference type="ChEBI" id="CHEBI:58210"/>
    </ligand>
</feature>
<feature type="binding site" evidence="1">
    <location>
        <position position="12"/>
    </location>
    <ligand>
        <name>NAD(+)</name>
        <dbReference type="ChEBI" id="CHEBI:57540"/>
    </ligand>
</feature>
<feature type="binding site" evidence="1">
    <location>
        <begin position="78"/>
        <end position="80"/>
    </location>
    <ligand>
        <name>FMN</name>
        <dbReference type="ChEBI" id="CHEBI:58210"/>
    </ligand>
</feature>
<feature type="binding site" evidence="1">
    <location>
        <position position="98"/>
    </location>
    <ligand>
        <name>substrate</name>
    </ligand>
</feature>
<feature type="binding site" evidence="1">
    <location>
        <begin position="113"/>
        <end position="119"/>
    </location>
    <ligand>
        <name>FMN</name>
        <dbReference type="ChEBI" id="CHEBI:58210"/>
    </ligand>
</feature>
<feature type="binding site" evidence="1">
    <location>
        <position position="134"/>
    </location>
    <ligand>
        <name>FMN</name>
        <dbReference type="ChEBI" id="CHEBI:58210"/>
    </ligand>
</feature>
<evidence type="ECO:0000255" key="1">
    <source>
        <dbReference type="HAMAP-Rule" id="MF_01017"/>
    </source>
</evidence>
<evidence type="ECO:0000256" key="2">
    <source>
        <dbReference type="SAM" id="MobiDB-lite"/>
    </source>
</evidence>
<dbReference type="EC" id="1.6.5.2" evidence="1"/>
<dbReference type="EMBL" id="CP000708">
    <property type="protein sequence ID" value="ABQ60884.1"/>
    <property type="molecule type" value="Genomic_DNA"/>
</dbReference>
<dbReference type="RefSeq" id="WP_006012529.1">
    <property type="nucleotide sequence ID" value="NC_009505.1"/>
</dbReference>
<dbReference type="SMR" id="A5VQI8"/>
<dbReference type="CAZy" id="AA6">
    <property type="family name" value="Auxiliary Activities 6"/>
</dbReference>
<dbReference type="GeneID" id="45124438"/>
<dbReference type="KEGG" id="bov:BOV_1014"/>
<dbReference type="HOGENOM" id="CLU_051402_0_2_5"/>
<dbReference type="PhylomeDB" id="A5VQI8"/>
<dbReference type="Proteomes" id="UP000006383">
    <property type="component" value="Chromosome I"/>
</dbReference>
<dbReference type="GO" id="GO:0016020">
    <property type="term" value="C:membrane"/>
    <property type="evidence" value="ECO:0007669"/>
    <property type="project" value="TreeGrafter"/>
</dbReference>
<dbReference type="GO" id="GO:0050660">
    <property type="term" value="F:flavin adenine dinucleotide binding"/>
    <property type="evidence" value="ECO:0007669"/>
    <property type="project" value="UniProtKB-UniRule"/>
</dbReference>
<dbReference type="GO" id="GO:0010181">
    <property type="term" value="F:FMN binding"/>
    <property type="evidence" value="ECO:0007669"/>
    <property type="project" value="InterPro"/>
</dbReference>
<dbReference type="GO" id="GO:0051287">
    <property type="term" value="F:NAD binding"/>
    <property type="evidence" value="ECO:0007669"/>
    <property type="project" value="UniProtKB-UniRule"/>
</dbReference>
<dbReference type="GO" id="GO:0050136">
    <property type="term" value="F:NADH:ubiquinone reductase (non-electrogenic) activity"/>
    <property type="evidence" value="ECO:0007669"/>
    <property type="project" value="RHEA"/>
</dbReference>
<dbReference type="GO" id="GO:0050661">
    <property type="term" value="F:NADP binding"/>
    <property type="evidence" value="ECO:0007669"/>
    <property type="project" value="UniProtKB-UniRule"/>
</dbReference>
<dbReference type="GO" id="GO:0008753">
    <property type="term" value="F:NADPH dehydrogenase (quinone) activity"/>
    <property type="evidence" value="ECO:0007669"/>
    <property type="project" value="RHEA"/>
</dbReference>
<dbReference type="FunFam" id="3.40.50.360:FF:000001">
    <property type="entry name" value="NAD(P)H dehydrogenase (Quinone) FQR1-like"/>
    <property type="match status" value="1"/>
</dbReference>
<dbReference type="Gene3D" id="3.40.50.360">
    <property type="match status" value="1"/>
</dbReference>
<dbReference type="HAMAP" id="MF_01017">
    <property type="entry name" value="NQOR"/>
    <property type="match status" value="1"/>
</dbReference>
<dbReference type="InterPro" id="IPR008254">
    <property type="entry name" value="Flavodoxin/NO_synth"/>
</dbReference>
<dbReference type="InterPro" id="IPR029039">
    <property type="entry name" value="Flavoprotein-like_sf"/>
</dbReference>
<dbReference type="InterPro" id="IPR010089">
    <property type="entry name" value="Flavoprotein_WrbA-like"/>
</dbReference>
<dbReference type="InterPro" id="IPR005025">
    <property type="entry name" value="FMN_Rdtase-like_dom"/>
</dbReference>
<dbReference type="InterPro" id="IPR037513">
    <property type="entry name" value="NQO"/>
</dbReference>
<dbReference type="NCBIfam" id="TIGR01755">
    <property type="entry name" value="flav_wrbA"/>
    <property type="match status" value="1"/>
</dbReference>
<dbReference type="NCBIfam" id="NF002999">
    <property type="entry name" value="PRK03767.1"/>
    <property type="match status" value="1"/>
</dbReference>
<dbReference type="PANTHER" id="PTHR30546">
    <property type="entry name" value="FLAVODOXIN-RELATED PROTEIN WRBA-RELATED"/>
    <property type="match status" value="1"/>
</dbReference>
<dbReference type="PANTHER" id="PTHR30546:SF23">
    <property type="entry name" value="FLAVOPROTEIN-LIKE PROTEIN YCP4-RELATED"/>
    <property type="match status" value="1"/>
</dbReference>
<dbReference type="Pfam" id="PF03358">
    <property type="entry name" value="FMN_red"/>
    <property type="match status" value="1"/>
</dbReference>
<dbReference type="SUPFAM" id="SSF52218">
    <property type="entry name" value="Flavoproteins"/>
    <property type="match status" value="1"/>
</dbReference>
<dbReference type="PROSITE" id="PS50902">
    <property type="entry name" value="FLAVODOXIN_LIKE"/>
    <property type="match status" value="1"/>
</dbReference>
<name>NQOR_BRUO2</name>